<keyword id="KW-0002">3D-structure</keyword>
<keyword id="KW-0067">ATP-binding</keyword>
<keyword id="KW-0227">DNA damage</keyword>
<keyword id="KW-0234">DNA repair</keyword>
<keyword id="KW-1259">Evasion of bacteria-mediated translation shutoff by virus</keyword>
<keyword id="KW-0945">Host-virus interaction</keyword>
<keyword id="KW-0378">Hydrolase</keyword>
<keyword id="KW-0418">Kinase</keyword>
<keyword id="KW-0547">Nucleotide-binding</keyword>
<keyword id="KW-1185">Reference proteome</keyword>
<keyword id="KW-0808">Transferase</keyword>
<sequence>MKKIILTIGCPGSGKSTWAREFIAKNPGFYNINRDDYRQSIMAHEERDEYKYTKKKEGIVTGMQFDTAKSILYGGDSVKGVIISDTNLNPERRLAWETFAKEYGWKVEHKVFDVPWTELVKRNSKRGTKAVPIDVLRSMYKSMREYLGLPVYNGTPGKPKAVIFDVDGTLAKMNGRGPYDLEKCDTDVINPMVVELSKMYALMGYQIVVVSGRESGTKEDPTKYYRMTRKWVEDIAGVPLVMQCQREQGDTRKDDVVKEEIFWKHIAPHFDVKLAIDDRTQVVEMWRRIGVECWQVASGDF</sequence>
<proteinExistence type="evidence at protein level"/>
<dbReference type="EC" id="2.7.1.78"/>
<dbReference type="EC" id="3.1.3.34" evidence="1"/>
<dbReference type="EMBL" id="X03007">
    <property type="protein sequence ID" value="CAA26792.1"/>
    <property type="molecule type" value="Genomic_DNA"/>
</dbReference>
<dbReference type="EMBL" id="AF158101">
    <property type="protein sequence ID" value="AAD42642.1"/>
    <property type="molecule type" value="Genomic_DNA"/>
</dbReference>
<dbReference type="EMBL" id="HM137666">
    <property type="protein sequence ID" value="ADJ39944.1"/>
    <property type="molecule type" value="Genomic_DNA"/>
</dbReference>
<dbReference type="EMBL" id="KJ477684">
    <property type="protein sequence ID" value="AHY83527.1"/>
    <property type="molecule type" value="Genomic_DNA"/>
</dbReference>
<dbReference type="EMBL" id="KJ477685">
    <property type="protein sequence ID" value="AHY83726.1"/>
    <property type="molecule type" value="Genomic_DNA"/>
</dbReference>
<dbReference type="EMBL" id="KJ477686">
    <property type="protein sequence ID" value="AHY83916.1"/>
    <property type="molecule type" value="Genomic_DNA"/>
</dbReference>
<dbReference type="PIR" id="A24642">
    <property type="entry name" value="KIBPP4"/>
</dbReference>
<dbReference type="RefSeq" id="NP_049834.1">
    <property type="nucleotide sequence ID" value="NC_000866.4"/>
</dbReference>
<dbReference type="PDB" id="1LTQ">
    <property type="method" value="X-ray"/>
    <property type="resolution" value="2.33 A"/>
    <property type="chains" value="A=1-301"/>
</dbReference>
<dbReference type="PDB" id="1LY1">
    <property type="method" value="X-ray"/>
    <property type="resolution" value="2.00 A"/>
    <property type="chains" value="A=1-181"/>
</dbReference>
<dbReference type="PDB" id="1RC8">
    <property type="method" value="X-ray"/>
    <property type="resolution" value="2.75 A"/>
    <property type="chains" value="A=1-301"/>
</dbReference>
<dbReference type="PDB" id="1RPZ">
    <property type="method" value="X-ray"/>
    <property type="resolution" value="2.90 A"/>
    <property type="chains" value="A=1-301"/>
</dbReference>
<dbReference type="PDB" id="1RRC">
    <property type="method" value="X-ray"/>
    <property type="resolution" value="2.46 A"/>
    <property type="chains" value="A=1-301"/>
</dbReference>
<dbReference type="PDB" id="2IA5">
    <property type="method" value="X-ray"/>
    <property type="resolution" value="2.90 A"/>
    <property type="chains" value="A/B/C/D/E/F/G/H/I/J/K/L=1-301"/>
</dbReference>
<dbReference type="PDB" id="5UJ0">
    <property type="method" value="X-ray"/>
    <property type="resolution" value="2.30 A"/>
    <property type="chains" value="A/B=158-301"/>
</dbReference>
<dbReference type="PDBsum" id="1LTQ"/>
<dbReference type="PDBsum" id="1LY1"/>
<dbReference type="PDBsum" id="1RC8"/>
<dbReference type="PDBsum" id="1RPZ"/>
<dbReference type="PDBsum" id="1RRC"/>
<dbReference type="PDBsum" id="2IA5"/>
<dbReference type="PDBsum" id="5UJ0"/>
<dbReference type="SMR" id="P06855"/>
<dbReference type="BindingDB" id="P06855"/>
<dbReference type="ChEMBL" id="CHEMBL5292"/>
<dbReference type="GeneID" id="1258796"/>
<dbReference type="KEGG" id="vg:1258796"/>
<dbReference type="OrthoDB" id="5906at10239"/>
<dbReference type="BRENDA" id="2.7.1.78">
    <property type="organism ID" value="732"/>
</dbReference>
<dbReference type="BRENDA" id="3.1.3.32">
    <property type="organism ID" value="732"/>
</dbReference>
<dbReference type="SABIO-RK" id="P06855"/>
<dbReference type="EvolutionaryTrace" id="P06855"/>
<dbReference type="PRO" id="PR:P06855"/>
<dbReference type="Proteomes" id="UP000001092">
    <property type="component" value="Segment"/>
</dbReference>
<dbReference type="Proteomes" id="UP000009087">
    <property type="component" value="Segment"/>
</dbReference>
<dbReference type="Proteomes" id="UP000185269">
    <property type="component" value="Genome"/>
</dbReference>
<dbReference type="Proteomes" id="UP000185270">
    <property type="component" value="Genome"/>
</dbReference>
<dbReference type="Proteomes" id="UP000185271">
    <property type="component" value="Genome"/>
</dbReference>
<dbReference type="GO" id="GO:0005524">
    <property type="term" value="F:ATP binding"/>
    <property type="evidence" value="ECO:0007669"/>
    <property type="project" value="UniProtKB-KW"/>
</dbReference>
<dbReference type="GO" id="GO:0046404">
    <property type="term" value="F:ATP-dependent polydeoxyribonucleotide 5'-hydroxyl-kinase activity"/>
    <property type="evidence" value="ECO:0007669"/>
    <property type="project" value="RHEA"/>
</dbReference>
<dbReference type="GO" id="GO:0047846">
    <property type="term" value="F:deoxynucleotide 3'-phosphatase activity"/>
    <property type="evidence" value="ECO:0000314"/>
    <property type="project" value="UniProtKB"/>
</dbReference>
<dbReference type="GO" id="GO:0006281">
    <property type="term" value="P:DNA repair"/>
    <property type="evidence" value="ECO:0007669"/>
    <property type="project" value="UniProtKB-KW"/>
</dbReference>
<dbReference type="CDD" id="cd07502">
    <property type="entry name" value="HAD_PNKP-C"/>
    <property type="match status" value="1"/>
</dbReference>
<dbReference type="FunFam" id="3.40.50.1000:FF:000231">
    <property type="entry name" value="Polynucleotide kinase"/>
    <property type="match status" value="1"/>
</dbReference>
<dbReference type="FunFam" id="3.40.50.300:FF:002193">
    <property type="entry name" value="Polynucleotide kinase"/>
    <property type="match status" value="1"/>
</dbReference>
<dbReference type="Gene3D" id="3.40.50.1000">
    <property type="entry name" value="HAD superfamily/HAD-like"/>
    <property type="match status" value="1"/>
</dbReference>
<dbReference type="Gene3D" id="3.40.50.300">
    <property type="entry name" value="P-loop containing nucleotide triphosphate hydrolases"/>
    <property type="match status" value="1"/>
</dbReference>
<dbReference type="InterPro" id="IPR036412">
    <property type="entry name" value="HAD-like_sf"/>
</dbReference>
<dbReference type="InterPro" id="IPR056782">
    <property type="entry name" value="HAD_PNKP"/>
</dbReference>
<dbReference type="InterPro" id="IPR023214">
    <property type="entry name" value="HAD_sf"/>
</dbReference>
<dbReference type="InterPro" id="IPR027417">
    <property type="entry name" value="P-loop_NTPase"/>
</dbReference>
<dbReference type="InterPro" id="IPR044493">
    <property type="entry name" value="PNKP_C_HAD"/>
</dbReference>
<dbReference type="Pfam" id="PF13671">
    <property type="entry name" value="AAA_33"/>
    <property type="match status" value="1"/>
</dbReference>
<dbReference type="Pfam" id="PF25109">
    <property type="entry name" value="HAD_PNKP"/>
    <property type="match status" value="1"/>
</dbReference>
<dbReference type="SFLD" id="SFLDG00010">
    <property type="entry name" value="C1.8:_polynucleotide_5'-hydrox"/>
    <property type="match status" value="1"/>
</dbReference>
<dbReference type="SFLD" id="SFLDS00003">
    <property type="entry name" value="Haloacid_Dehalogenase"/>
    <property type="match status" value="1"/>
</dbReference>
<dbReference type="SUPFAM" id="SSF56784">
    <property type="entry name" value="HAD-like"/>
    <property type="match status" value="1"/>
</dbReference>
<dbReference type="SUPFAM" id="SSF52540">
    <property type="entry name" value="P-loop containing nucleoside triphosphate hydrolases"/>
    <property type="match status" value="1"/>
</dbReference>
<gene>
    <name type="primary">pseT</name>
</gene>
<feature type="chain" id="PRO_0000164949" description="Polynucleotide kinase">
    <location>
        <begin position="1"/>
        <end position="301"/>
    </location>
</feature>
<feature type="strand" evidence="9">
    <location>
        <begin position="3"/>
        <end position="8"/>
    </location>
</feature>
<feature type="helix" evidence="9">
    <location>
        <begin position="15"/>
        <end position="25"/>
    </location>
</feature>
<feature type="strand" evidence="9">
    <location>
        <begin position="29"/>
        <end position="32"/>
    </location>
</feature>
<feature type="helix" evidence="9">
    <location>
        <begin position="34"/>
        <end position="41"/>
    </location>
</feature>
<feature type="helix" evidence="9">
    <location>
        <begin position="47"/>
        <end position="49"/>
    </location>
</feature>
<feature type="helix" evidence="9">
    <location>
        <begin position="54"/>
        <end position="72"/>
    </location>
</feature>
<feature type="helix" evidence="11">
    <location>
        <begin position="75"/>
        <end position="77"/>
    </location>
</feature>
<feature type="strand" evidence="9">
    <location>
        <begin position="80"/>
        <end position="83"/>
    </location>
</feature>
<feature type="helix" evidence="9">
    <location>
        <begin position="90"/>
        <end position="103"/>
    </location>
</feature>
<feature type="strand" evidence="9">
    <location>
        <begin position="106"/>
        <end position="111"/>
    </location>
</feature>
<feature type="helix" evidence="9">
    <location>
        <begin position="116"/>
        <end position="123"/>
    </location>
</feature>
<feature type="helix" evidence="9">
    <location>
        <begin position="127"/>
        <end position="129"/>
    </location>
</feature>
<feature type="helix" evidence="9">
    <location>
        <begin position="133"/>
        <end position="147"/>
    </location>
</feature>
<feature type="strand" evidence="10">
    <location>
        <begin position="156"/>
        <end position="158"/>
    </location>
</feature>
<feature type="strand" evidence="12">
    <location>
        <begin position="160"/>
        <end position="164"/>
    </location>
</feature>
<feature type="turn" evidence="12">
    <location>
        <begin position="168"/>
        <end position="170"/>
    </location>
</feature>
<feature type="helix" evidence="12">
    <location>
        <begin position="181"/>
        <end position="186"/>
    </location>
</feature>
<feature type="helix" evidence="12">
    <location>
        <begin position="191"/>
        <end position="202"/>
    </location>
</feature>
<feature type="strand" evidence="12">
    <location>
        <begin position="206"/>
        <end position="214"/>
    </location>
</feature>
<feature type="strand" evidence="12">
    <location>
        <begin position="218"/>
        <end position="220"/>
    </location>
</feature>
<feature type="helix" evidence="12">
    <location>
        <begin position="223"/>
        <end position="234"/>
    </location>
</feature>
<feature type="strand" evidence="12">
    <location>
        <begin position="241"/>
        <end position="246"/>
    </location>
</feature>
<feature type="helix" evidence="12">
    <location>
        <begin position="254"/>
        <end position="265"/>
    </location>
</feature>
<feature type="turn" evidence="12">
    <location>
        <begin position="266"/>
        <end position="269"/>
    </location>
</feature>
<feature type="strand" evidence="12">
    <location>
        <begin position="271"/>
        <end position="278"/>
    </location>
</feature>
<feature type="helix" evidence="12">
    <location>
        <begin position="280"/>
        <end position="288"/>
    </location>
</feature>
<feature type="strand" evidence="12">
    <location>
        <begin position="293"/>
        <end position="295"/>
    </location>
</feature>
<organismHost>
    <name type="scientific">Escherichia coli</name>
    <dbReference type="NCBI Taxonomy" id="562"/>
</organismHost>
<evidence type="ECO:0000269" key="1">
    <source>
    </source>
</evidence>
<evidence type="ECO:0000269" key="2">
    <source>
    </source>
</evidence>
<evidence type="ECO:0000269" key="3">
    <source>
    </source>
</evidence>
<evidence type="ECO:0000269" key="4">
    <source>
    </source>
</evidence>
<evidence type="ECO:0000303" key="5">
    <source>
    </source>
</evidence>
<evidence type="ECO:0000312" key="6">
    <source>
        <dbReference type="EMBL" id="AHY83527.1"/>
    </source>
</evidence>
<evidence type="ECO:0000312" key="7">
    <source>
        <dbReference type="EMBL" id="AHY83726.1"/>
    </source>
</evidence>
<evidence type="ECO:0000312" key="8">
    <source>
        <dbReference type="EMBL" id="AHY83916.1"/>
    </source>
</evidence>
<evidence type="ECO:0007829" key="9">
    <source>
        <dbReference type="PDB" id="1LY1"/>
    </source>
</evidence>
<evidence type="ECO:0007829" key="10">
    <source>
        <dbReference type="PDB" id="1RC8"/>
    </source>
</evidence>
<evidence type="ECO:0007829" key="11">
    <source>
        <dbReference type="PDB" id="2IA5"/>
    </source>
</evidence>
<evidence type="ECO:0007829" key="12">
    <source>
        <dbReference type="PDB" id="5UJ0"/>
    </source>
</evidence>
<name>KIPN_BPT4</name>
<organism>
    <name type="scientific">Enterobacteria phage T4</name>
    <name type="common">Bacteriophage T4</name>
    <dbReference type="NCBI Taxonomy" id="10665"/>
    <lineage>
        <taxon>Viruses</taxon>
        <taxon>Duplodnaviria</taxon>
        <taxon>Heunggongvirae</taxon>
        <taxon>Uroviricota</taxon>
        <taxon>Caudoviricetes</taxon>
        <taxon>Straboviridae</taxon>
        <taxon>Tevenvirinae</taxon>
        <taxon>Tequatrovirus</taxon>
    </lineage>
</organism>
<protein>
    <recommendedName>
        <fullName>Polynucleotide kinase</fullName>
        <shortName>PNK</shortName>
        <ecNumber>2.7.1.78</ecNumber>
    </recommendedName>
    <alternativeName>
        <fullName evidence="5">Deoxynucleotide 3'-phosphatase</fullName>
        <ecNumber evidence="1">3.1.3.34</ecNumber>
    </alternativeName>
    <alternativeName>
        <fullName>Polynucleotide 5'-hydroxyl-kinase</fullName>
    </alternativeName>
</protein>
<comment type="function">
    <text evidence="1 2 3 4">Acts as a 5'-hydroxyl kinase, a 3'-phosphatase and a 2',3'-cyclic phosphodiesterase. Catalyzes the transfer of the terminal phosphate of ATP to the 5'-hydroxyl termini of ribo- and deoxyribonucleotides. In the presence of ADP the enzyme also catalyzes an exchange reaction. In the exchange reaction, an excess ADP causes the enzyme to transfer the 5' terminal phosphate from phosphorylated DNA to ADP (PubMed:199248, PubMed:5323016). Involved in countering a host defense mechanism which activates T4-induced anticodon nuclease and shuts off viral translation. The polynucleotide kinase modifies the ends of nicked tRNA generated by the antiviral response of the host bacteria and facilitates repair by T4 RNA ligase (PubMed:2444436).</text>
</comment>
<comment type="catalytic activity">
    <reaction>
        <text>a 5'-end dephospho-2'-deoxyribonucleoside-DNA + ATP = a 5'-end 5'-phospho-2'-deoxyribonucleoside-DNA + ADP + H(+)</text>
        <dbReference type="Rhea" id="RHEA:15669"/>
        <dbReference type="Rhea" id="RHEA-COMP:13180"/>
        <dbReference type="Rhea" id="RHEA-COMP:13184"/>
        <dbReference type="ChEBI" id="CHEBI:15378"/>
        <dbReference type="ChEBI" id="CHEBI:30616"/>
        <dbReference type="ChEBI" id="CHEBI:136412"/>
        <dbReference type="ChEBI" id="CHEBI:136416"/>
        <dbReference type="ChEBI" id="CHEBI:456216"/>
        <dbReference type="EC" id="2.7.1.78"/>
    </reaction>
</comment>
<comment type="catalytic activity">
    <reaction evidence="1">
        <text>a 2'-deoxyribonucleoside 3'-phosphate + H2O = a 2'-deoxyribonucleoside + phosphate</text>
        <dbReference type="Rhea" id="RHEA:10092"/>
        <dbReference type="ChEBI" id="CHEBI:15377"/>
        <dbReference type="ChEBI" id="CHEBI:18274"/>
        <dbReference type="ChEBI" id="CHEBI:43474"/>
        <dbReference type="ChEBI" id="CHEBI:131705"/>
        <dbReference type="EC" id="3.1.3.34"/>
    </reaction>
</comment>
<comment type="cofactor">
    <cofactor evidence="1 4">
        <name>Mg(2+)</name>
        <dbReference type="ChEBI" id="CHEBI:18420"/>
    </cofactor>
</comment>
<comment type="biophysicochemical properties">
    <phDependence>
        <text evidence="1">Optimum pH is 6.</text>
    </phDependence>
</comment>
<comment type="subunit">
    <text>Homotetramer.</text>
</comment>
<accession>P06855</accession>
<accession>D9IEQ8</accession>
<reference key="1">
    <citation type="journal article" date="1985" name="EMBO J.">
        <title>T4 polynucleotide kinase; cloning of the gene (pseT) and amplification of its product.</title>
        <authorList>
            <person name="Midgley C.A."/>
            <person name="Murray N.E."/>
        </authorList>
    </citation>
    <scope>NUCLEOTIDE SEQUENCE [GENOMIC DNA]</scope>
</reference>
<reference key="2">
    <citation type="journal article" date="2003" name="Microbiol. Mol. Biol. Rev.">
        <title>Bacteriophage T4 genome.</title>
        <authorList>
            <person name="Miller E.S."/>
            <person name="Kutter E."/>
            <person name="Mosig G."/>
            <person name="Arisaka F."/>
            <person name="Kunisawa T."/>
            <person name="Ruger W."/>
        </authorList>
    </citation>
    <scope>NUCLEOTIDE SEQUENCE [LARGE SCALE GENOMIC DNA]</scope>
</reference>
<reference key="3">
    <citation type="journal article" date="2010" name="Virol. J.">
        <title>Genomes of the T4-related bacteriophages as windows on microbial genome evolution.</title>
        <authorList>
            <person name="Petrov V.M."/>
            <person name="Ratnayaka S."/>
            <person name="Nolan J.M."/>
            <person name="Miller E.S."/>
            <person name="Karam J.D."/>
        </authorList>
    </citation>
    <scope>NUCLEOTIDE SEQUENCE [LARGE SCALE GENOMIC DNA]</scope>
</reference>
<reference key="4">
    <citation type="journal article" date="2015" name="MBio">
        <title>Covalent Modification of Bacteriophage T4 DNA Inhibits CRISPR-Cas9.</title>
        <authorList>
            <person name="Bryson A.L."/>
            <person name="Hwang Y."/>
            <person name="Sherrill-Mix S."/>
            <person name="Wu G.D."/>
            <person name="Lewis J.D."/>
            <person name="Black L."/>
            <person name="Clark T.A."/>
            <person name="Bushman F.D."/>
        </authorList>
    </citation>
    <scope>NUCLEOTIDE SEQUENCE [LARGE SCALE GENOMIC DNA]</scope>
    <source>
        <strain evidence="7">147</strain>
        <strain evidence="8">GT7</strain>
        <strain evidence="6">Wild</strain>
    </source>
</reference>
<reference key="5">
    <citation type="journal article" date="1967" name="J. Biol. Chem.">
        <title>The enzymatic cleavage of phosphate termini from polynucleotides.</title>
        <authorList>
            <person name="Becker A."/>
            <person name="Hurwitz J."/>
        </authorList>
    </citation>
    <scope>FUNCTION</scope>
</reference>
<reference key="6">
    <citation type="journal article" date="1965" name="Proc. Natl. Acad. Sci. U.S.A.">
        <title>Phosphorylation of nucleic acid by an enzyme from T4 bacteriophage-infected Escherichia coli.</title>
        <authorList>
            <person name="Richardson C.C."/>
        </authorList>
    </citation>
    <scope>FUNCTION</scope>
    <scope>COFACTOR</scope>
</reference>
<reference key="7">
    <citation type="journal article" date="1977" name="Biochemistry">
        <title>3'-Phosphatase activity in T4 polynucleotide kinase.</title>
        <authorList>
            <person name="Cameron V."/>
            <person name="Uhlenbeck O.C."/>
        </authorList>
    </citation>
    <scope>FUNCTION</scope>
    <scope>BIOPHYSICOCHEMICAL PROPERTIES</scope>
    <scope>COFACTOR</scope>
    <scope>CATALYTIC ACTIVITY</scope>
</reference>
<reference key="8">
    <citation type="journal article" date="1987" name="EMBO J.">
        <title>Bacteriophage T4 anticodon nuclease, polynucleotide kinase and RNA ligase reprocess the host lysine tRNA.</title>
        <authorList>
            <person name="Amitsur M."/>
            <person name="Levitz R."/>
            <person name="Kaufmann G."/>
        </authorList>
    </citation>
    <scope>FUNCTION</scope>
</reference>
<reference key="9">
    <citation type="journal article" date="2002" name="Structure">
        <title>Structure of a tRNA repair enzyme and molecular biology workhorse: T4 polynucleotide kinase.</title>
        <authorList>
            <person name="Galburt E.A."/>
            <person name="Pelletier J."/>
            <person name="Wilson G."/>
            <person name="Stoddard B.L."/>
        </authorList>
    </citation>
    <scope>X-RAY CRYSTALLOGRAPHY (2.33 ANGSTROMS)</scope>
</reference>